<name>TGT_ACISJ</name>
<keyword id="KW-0328">Glycosyltransferase</keyword>
<keyword id="KW-0479">Metal-binding</keyword>
<keyword id="KW-0671">Queuosine biosynthesis</keyword>
<keyword id="KW-0808">Transferase</keyword>
<keyword id="KW-0819">tRNA processing</keyword>
<keyword id="KW-0862">Zinc</keyword>
<reference key="1">
    <citation type="submission" date="2006-12" db="EMBL/GenBank/DDBJ databases">
        <title>Complete sequence of chromosome 1 of Acidovorax sp. JS42.</title>
        <authorList>
            <person name="Copeland A."/>
            <person name="Lucas S."/>
            <person name="Lapidus A."/>
            <person name="Barry K."/>
            <person name="Detter J.C."/>
            <person name="Glavina del Rio T."/>
            <person name="Dalin E."/>
            <person name="Tice H."/>
            <person name="Pitluck S."/>
            <person name="Chertkov O."/>
            <person name="Brettin T."/>
            <person name="Bruce D."/>
            <person name="Han C."/>
            <person name="Tapia R."/>
            <person name="Gilna P."/>
            <person name="Schmutz J."/>
            <person name="Larimer F."/>
            <person name="Land M."/>
            <person name="Hauser L."/>
            <person name="Kyrpides N."/>
            <person name="Kim E."/>
            <person name="Stahl D."/>
            <person name="Richardson P."/>
        </authorList>
    </citation>
    <scope>NUCLEOTIDE SEQUENCE [LARGE SCALE GENOMIC DNA]</scope>
    <source>
        <strain>JS42</strain>
    </source>
</reference>
<evidence type="ECO:0000255" key="1">
    <source>
        <dbReference type="HAMAP-Rule" id="MF_00168"/>
    </source>
</evidence>
<feature type="chain" id="PRO_1000058274" description="Queuine tRNA-ribosyltransferase">
    <location>
        <begin position="1"/>
        <end position="390"/>
    </location>
</feature>
<feature type="region of interest" description="RNA binding" evidence="1">
    <location>
        <begin position="253"/>
        <end position="259"/>
    </location>
</feature>
<feature type="region of interest" description="RNA binding; important for wobble base 34 recognition" evidence="1">
    <location>
        <begin position="277"/>
        <end position="281"/>
    </location>
</feature>
<feature type="active site" description="Proton acceptor" evidence="1">
    <location>
        <position position="92"/>
    </location>
</feature>
<feature type="active site" description="Nucleophile" evidence="1">
    <location>
        <position position="272"/>
    </location>
</feature>
<feature type="binding site" evidence="1">
    <location>
        <begin position="92"/>
        <end position="96"/>
    </location>
    <ligand>
        <name>substrate</name>
    </ligand>
</feature>
<feature type="binding site" evidence="1">
    <location>
        <position position="146"/>
    </location>
    <ligand>
        <name>substrate</name>
    </ligand>
</feature>
<feature type="binding site" evidence="1">
    <location>
        <position position="195"/>
    </location>
    <ligand>
        <name>substrate</name>
    </ligand>
</feature>
<feature type="binding site" evidence="1">
    <location>
        <position position="222"/>
    </location>
    <ligand>
        <name>substrate</name>
    </ligand>
</feature>
<feature type="binding site" evidence="1">
    <location>
        <position position="310"/>
    </location>
    <ligand>
        <name>Zn(2+)</name>
        <dbReference type="ChEBI" id="CHEBI:29105"/>
    </ligand>
</feature>
<feature type="binding site" evidence="1">
    <location>
        <position position="312"/>
    </location>
    <ligand>
        <name>Zn(2+)</name>
        <dbReference type="ChEBI" id="CHEBI:29105"/>
    </ligand>
</feature>
<feature type="binding site" evidence="1">
    <location>
        <position position="315"/>
    </location>
    <ligand>
        <name>Zn(2+)</name>
        <dbReference type="ChEBI" id="CHEBI:29105"/>
    </ligand>
</feature>
<feature type="binding site" evidence="1">
    <location>
        <position position="354"/>
    </location>
    <ligand>
        <name>Zn(2+)</name>
        <dbReference type="ChEBI" id="CHEBI:29105"/>
    </ligand>
</feature>
<proteinExistence type="inferred from homology"/>
<gene>
    <name evidence="1" type="primary">tgt</name>
    <name type="ordered locus">Ajs_3870</name>
</gene>
<accession>A1WCK2</accession>
<dbReference type="EC" id="2.4.2.29" evidence="1"/>
<dbReference type="EMBL" id="CP000539">
    <property type="protein sequence ID" value="ABM43977.1"/>
    <property type="molecule type" value="Genomic_DNA"/>
</dbReference>
<dbReference type="SMR" id="A1WCK2"/>
<dbReference type="STRING" id="232721.Ajs_3870"/>
<dbReference type="KEGG" id="ajs:Ajs_3870"/>
<dbReference type="eggNOG" id="COG0343">
    <property type="taxonomic scope" value="Bacteria"/>
</dbReference>
<dbReference type="HOGENOM" id="CLU_022060_0_1_4"/>
<dbReference type="UniPathway" id="UPA00392"/>
<dbReference type="Proteomes" id="UP000000645">
    <property type="component" value="Chromosome"/>
</dbReference>
<dbReference type="GO" id="GO:0005829">
    <property type="term" value="C:cytosol"/>
    <property type="evidence" value="ECO:0007669"/>
    <property type="project" value="TreeGrafter"/>
</dbReference>
<dbReference type="GO" id="GO:0046872">
    <property type="term" value="F:metal ion binding"/>
    <property type="evidence" value="ECO:0007669"/>
    <property type="project" value="UniProtKB-KW"/>
</dbReference>
<dbReference type="GO" id="GO:0008479">
    <property type="term" value="F:tRNA-guanosine(34) queuine transglycosylase activity"/>
    <property type="evidence" value="ECO:0007669"/>
    <property type="project" value="UniProtKB-UniRule"/>
</dbReference>
<dbReference type="GO" id="GO:0008616">
    <property type="term" value="P:queuosine biosynthetic process"/>
    <property type="evidence" value="ECO:0007669"/>
    <property type="project" value="UniProtKB-UniRule"/>
</dbReference>
<dbReference type="GO" id="GO:0002099">
    <property type="term" value="P:tRNA wobble guanine modification"/>
    <property type="evidence" value="ECO:0007669"/>
    <property type="project" value="TreeGrafter"/>
</dbReference>
<dbReference type="GO" id="GO:0101030">
    <property type="term" value="P:tRNA-guanine transglycosylation"/>
    <property type="evidence" value="ECO:0007669"/>
    <property type="project" value="InterPro"/>
</dbReference>
<dbReference type="FunFam" id="3.20.20.105:FF:000001">
    <property type="entry name" value="Queuine tRNA-ribosyltransferase"/>
    <property type="match status" value="1"/>
</dbReference>
<dbReference type="Gene3D" id="3.20.20.105">
    <property type="entry name" value="Queuine tRNA-ribosyltransferase-like"/>
    <property type="match status" value="1"/>
</dbReference>
<dbReference type="HAMAP" id="MF_00168">
    <property type="entry name" value="Q_tRNA_Tgt"/>
    <property type="match status" value="1"/>
</dbReference>
<dbReference type="InterPro" id="IPR050076">
    <property type="entry name" value="ArchSynthase1/Queuine_TRR"/>
</dbReference>
<dbReference type="InterPro" id="IPR004803">
    <property type="entry name" value="TGT"/>
</dbReference>
<dbReference type="InterPro" id="IPR036511">
    <property type="entry name" value="TGT-like_sf"/>
</dbReference>
<dbReference type="InterPro" id="IPR002616">
    <property type="entry name" value="tRNA_ribo_trans-like"/>
</dbReference>
<dbReference type="NCBIfam" id="TIGR00430">
    <property type="entry name" value="Q_tRNA_tgt"/>
    <property type="match status" value="1"/>
</dbReference>
<dbReference type="NCBIfam" id="TIGR00449">
    <property type="entry name" value="tgt_general"/>
    <property type="match status" value="1"/>
</dbReference>
<dbReference type="PANTHER" id="PTHR46499">
    <property type="entry name" value="QUEUINE TRNA-RIBOSYLTRANSFERASE"/>
    <property type="match status" value="1"/>
</dbReference>
<dbReference type="PANTHER" id="PTHR46499:SF1">
    <property type="entry name" value="QUEUINE TRNA-RIBOSYLTRANSFERASE"/>
    <property type="match status" value="1"/>
</dbReference>
<dbReference type="Pfam" id="PF01702">
    <property type="entry name" value="TGT"/>
    <property type="match status" value="1"/>
</dbReference>
<dbReference type="SUPFAM" id="SSF51713">
    <property type="entry name" value="tRNA-guanine transglycosylase"/>
    <property type="match status" value="1"/>
</dbReference>
<comment type="function">
    <text evidence="1">Catalyzes the base-exchange of a guanine (G) residue with the queuine precursor 7-aminomethyl-7-deazaguanine (PreQ1) at position 34 (anticodon wobble position) in tRNAs with GU(N) anticodons (tRNA-Asp, -Asn, -His and -Tyr). Catalysis occurs through a double-displacement mechanism. The nucleophile active site attacks the C1' of nucleotide 34 to detach the guanine base from the RNA, forming a covalent enzyme-RNA intermediate. The proton acceptor active site deprotonates the incoming PreQ1, allowing a nucleophilic attack on the C1' of the ribose to form the product. After dissociation, two additional enzymatic reactions on the tRNA convert PreQ1 to queuine (Q), resulting in the hypermodified nucleoside queuosine (7-(((4,5-cis-dihydroxy-2-cyclopenten-1-yl)amino)methyl)-7-deazaguanosine).</text>
</comment>
<comment type="catalytic activity">
    <reaction evidence="1">
        <text>7-aminomethyl-7-carbaguanine + guanosine(34) in tRNA = 7-aminomethyl-7-carbaguanosine(34) in tRNA + guanine</text>
        <dbReference type="Rhea" id="RHEA:24104"/>
        <dbReference type="Rhea" id="RHEA-COMP:10341"/>
        <dbReference type="Rhea" id="RHEA-COMP:10342"/>
        <dbReference type="ChEBI" id="CHEBI:16235"/>
        <dbReference type="ChEBI" id="CHEBI:58703"/>
        <dbReference type="ChEBI" id="CHEBI:74269"/>
        <dbReference type="ChEBI" id="CHEBI:82833"/>
        <dbReference type="EC" id="2.4.2.29"/>
    </reaction>
</comment>
<comment type="cofactor">
    <cofactor evidence="1">
        <name>Zn(2+)</name>
        <dbReference type="ChEBI" id="CHEBI:29105"/>
    </cofactor>
    <text evidence="1">Binds 1 zinc ion per subunit.</text>
</comment>
<comment type="pathway">
    <text evidence="1">tRNA modification; tRNA-queuosine biosynthesis.</text>
</comment>
<comment type="subunit">
    <text evidence="1">Homodimer. Within each dimer, one monomer is responsible for RNA recognition and catalysis, while the other monomer binds to the replacement base PreQ1.</text>
</comment>
<comment type="similarity">
    <text evidence="1">Belongs to the queuine tRNA-ribosyltransferase family.</text>
</comment>
<sequence length="390" mass="43520">MLKFEILATDTSSHARRGKLTLNHGVVQTPIFMPVGTYGTVKGVMPRSLREMGAQIILGNTFHLWMRPGLDVMQSFGGLHGFEQWDKPILTDSGGFQVWSLGSMRKITEEGVHFASPVNGDKLFMSPEVSMQIQTTLNSDIVMQLDECTPYETNGHKTTEAEARKSMEMSRRWAVRSKNEFERLGNPNALFGIVQGGMYKNLRQESLEALVEMDFPGYAVGGVSVGEPKDEMLDIMAHTPHRLPAHKPRYLMGVGTPEDLVEGVAQGVDMFDCVMPTRNARNGTLFTRYGDLKIRNARHKTDHQPLDPSCTCHACAGTEGVSWNDGGRGGFSRAYLHHLDRCGEMLGPMLTTIHNLHYYLNLMREVREALDAGQFGAFRARFKAERARGV</sequence>
<organism>
    <name type="scientific">Acidovorax sp. (strain JS42)</name>
    <dbReference type="NCBI Taxonomy" id="232721"/>
    <lineage>
        <taxon>Bacteria</taxon>
        <taxon>Pseudomonadati</taxon>
        <taxon>Pseudomonadota</taxon>
        <taxon>Betaproteobacteria</taxon>
        <taxon>Burkholderiales</taxon>
        <taxon>Comamonadaceae</taxon>
        <taxon>Acidovorax</taxon>
    </lineage>
</organism>
<protein>
    <recommendedName>
        <fullName evidence="1">Queuine tRNA-ribosyltransferase</fullName>
        <ecNumber evidence="1">2.4.2.29</ecNumber>
    </recommendedName>
    <alternativeName>
        <fullName evidence="1">Guanine insertion enzyme</fullName>
    </alternativeName>
    <alternativeName>
        <fullName evidence="1">tRNA-guanine transglycosylase</fullName>
    </alternativeName>
</protein>